<sequence length="154" mass="15913">MVRAVAVLRGDSKVSGVVTFEQVDQNSQVSVIVDLVGNDANAKRGFHIHQFGDNTNGCTSAGPHFNPEGKTHGDRTAAVRHVGDLGNLESDAQGNIKTTFSDSVISLFGANSIIGRTIVIHAGEDDLGKGTSEESLKTGNAGARNACGVIGIAV</sequence>
<proteinExistence type="evidence at transcript level"/>
<name>SODC_SCHPO</name>
<evidence type="ECO:0000250" key="1">
    <source>
        <dbReference type="UniProtKB" id="P00442"/>
    </source>
</evidence>
<evidence type="ECO:0000250" key="2">
    <source>
        <dbReference type="UniProtKB" id="P00445"/>
    </source>
</evidence>
<evidence type="ECO:0000250" key="3">
    <source>
        <dbReference type="UniProtKB" id="P85978"/>
    </source>
</evidence>
<evidence type="ECO:0000305" key="4"/>
<accession>P28758</accession>
<protein>
    <recommendedName>
        <fullName>Superoxide dismutase [Cu-Zn]</fullName>
        <ecNumber evidence="3">1.15.1.1</ecNumber>
    </recommendedName>
</protein>
<keyword id="KW-0049">Antioxidant</keyword>
<keyword id="KW-0186">Copper</keyword>
<keyword id="KW-0963">Cytoplasm</keyword>
<keyword id="KW-1015">Disulfide bond</keyword>
<keyword id="KW-0479">Metal-binding</keyword>
<keyword id="KW-0560">Oxidoreductase</keyword>
<keyword id="KW-1185">Reference proteome</keyword>
<keyword id="KW-0862">Zinc</keyword>
<gene>
    <name type="primary">sod1</name>
    <name type="ORF">SPAC821.10c</name>
</gene>
<dbReference type="EC" id="1.15.1.1" evidence="3"/>
<dbReference type="EMBL" id="X66722">
    <property type="protein sequence ID" value="CAA47254.1"/>
    <property type="molecule type" value="mRNA"/>
</dbReference>
<dbReference type="EMBL" id="AB016217">
    <property type="protein sequence ID" value="BAA31741.1"/>
    <property type="molecule type" value="mRNA"/>
</dbReference>
<dbReference type="EMBL" id="CU329670">
    <property type="protein sequence ID" value="CAB57444.1"/>
    <property type="molecule type" value="Genomic_DNA"/>
</dbReference>
<dbReference type="EMBL" id="AF069075">
    <property type="protein sequence ID" value="AAC99342.1"/>
    <property type="molecule type" value="Genomic_DNA"/>
</dbReference>
<dbReference type="PIR" id="S24971">
    <property type="entry name" value="S24971"/>
</dbReference>
<dbReference type="RefSeq" id="NP_593163.1">
    <property type="nucleotide sequence ID" value="NM_001018561.2"/>
</dbReference>
<dbReference type="SMR" id="P28758"/>
<dbReference type="BioGRID" id="278604">
    <property type="interactions" value="16"/>
</dbReference>
<dbReference type="FunCoup" id="P28758">
    <property type="interactions" value="226"/>
</dbReference>
<dbReference type="IntAct" id="P28758">
    <property type="interactions" value="2"/>
</dbReference>
<dbReference type="MINT" id="P28758"/>
<dbReference type="STRING" id="284812.P28758"/>
<dbReference type="iPTMnet" id="P28758"/>
<dbReference type="PaxDb" id="4896-SPAC821.10c.1"/>
<dbReference type="EnsemblFungi" id="SPAC821.10c.1">
    <property type="protein sequence ID" value="SPAC821.10c.1:pep"/>
    <property type="gene ID" value="SPAC821.10c"/>
</dbReference>
<dbReference type="GeneID" id="2542128"/>
<dbReference type="KEGG" id="spo:2542128"/>
<dbReference type="PomBase" id="SPAC821.10c">
    <property type="gene designation" value="sod1"/>
</dbReference>
<dbReference type="VEuPathDB" id="FungiDB:SPAC821.10c"/>
<dbReference type="eggNOG" id="KOG0441">
    <property type="taxonomic scope" value="Eukaryota"/>
</dbReference>
<dbReference type="HOGENOM" id="CLU_056632_4_1_1"/>
<dbReference type="InParanoid" id="P28758"/>
<dbReference type="OMA" id="AQRGFHI"/>
<dbReference type="PhylomeDB" id="P28758"/>
<dbReference type="Reactome" id="R-SPO-114608">
    <property type="pathway name" value="Platelet degranulation"/>
</dbReference>
<dbReference type="Reactome" id="R-SPO-3299685">
    <property type="pathway name" value="Detoxification of Reactive Oxygen Species"/>
</dbReference>
<dbReference type="PRO" id="PR:P28758"/>
<dbReference type="Proteomes" id="UP000002485">
    <property type="component" value="Chromosome I"/>
</dbReference>
<dbReference type="GO" id="GO:0005829">
    <property type="term" value="C:cytosol"/>
    <property type="evidence" value="ECO:0000250"/>
    <property type="project" value="PomBase"/>
</dbReference>
<dbReference type="GO" id="GO:0005758">
    <property type="term" value="C:mitochondrial intermembrane space"/>
    <property type="evidence" value="ECO:0000266"/>
    <property type="project" value="PomBase"/>
</dbReference>
<dbReference type="GO" id="GO:0005507">
    <property type="term" value="F:copper ion binding"/>
    <property type="evidence" value="ECO:0000318"/>
    <property type="project" value="GO_Central"/>
</dbReference>
<dbReference type="GO" id="GO:0004784">
    <property type="term" value="F:superoxide dismutase activity"/>
    <property type="evidence" value="ECO:0000315"/>
    <property type="project" value="PomBase"/>
</dbReference>
<dbReference type="GO" id="GO:0045454">
    <property type="term" value="P:cell redox homeostasis"/>
    <property type="evidence" value="ECO:0000315"/>
    <property type="project" value="PomBase"/>
</dbReference>
<dbReference type="GO" id="GO:0006878">
    <property type="term" value="P:intracellular copper ion homeostasis"/>
    <property type="evidence" value="ECO:0000250"/>
    <property type="project" value="PomBase"/>
</dbReference>
<dbReference type="GO" id="GO:0006882">
    <property type="term" value="P:intracellular zinc ion homeostasis"/>
    <property type="evidence" value="ECO:0000315"/>
    <property type="project" value="PomBase"/>
</dbReference>
<dbReference type="GO" id="GO:0019430">
    <property type="term" value="P:removal of superoxide radicals"/>
    <property type="evidence" value="ECO:0000318"/>
    <property type="project" value="GO_Central"/>
</dbReference>
<dbReference type="CDD" id="cd00305">
    <property type="entry name" value="Cu-Zn_Superoxide_Dismutase"/>
    <property type="match status" value="1"/>
</dbReference>
<dbReference type="FunFam" id="2.60.40.200:FF:000001">
    <property type="entry name" value="Superoxide dismutase [Cu-Zn]"/>
    <property type="match status" value="1"/>
</dbReference>
<dbReference type="Gene3D" id="2.60.40.200">
    <property type="entry name" value="Superoxide dismutase, copper/zinc binding domain"/>
    <property type="match status" value="1"/>
</dbReference>
<dbReference type="InterPro" id="IPR036423">
    <property type="entry name" value="SOD-like_Cu/Zn_dom_sf"/>
</dbReference>
<dbReference type="InterPro" id="IPR024134">
    <property type="entry name" value="SOD_Cu/Zn_/chaperone"/>
</dbReference>
<dbReference type="InterPro" id="IPR018152">
    <property type="entry name" value="SOD_Cu/Zn_BS"/>
</dbReference>
<dbReference type="InterPro" id="IPR001424">
    <property type="entry name" value="SOD_Cu_Zn_dom"/>
</dbReference>
<dbReference type="PANTHER" id="PTHR10003">
    <property type="entry name" value="SUPEROXIDE DISMUTASE CU-ZN -RELATED"/>
    <property type="match status" value="1"/>
</dbReference>
<dbReference type="Pfam" id="PF00080">
    <property type="entry name" value="Sod_Cu"/>
    <property type="match status" value="1"/>
</dbReference>
<dbReference type="PRINTS" id="PR00068">
    <property type="entry name" value="CUZNDISMTASE"/>
</dbReference>
<dbReference type="SUPFAM" id="SSF49329">
    <property type="entry name" value="Cu,Zn superoxide dismutase-like"/>
    <property type="match status" value="1"/>
</dbReference>
<dbReference type="PROSITE" id="PS00087">
    <property type="entry name" value="SOD_CU_ZN_1"/>
    <property type="match status" value="1"/>
</dbReference>
<dbReference type="PROSITE" id="PS00332">
    <property type="entry name" value="SOD_CU_ZN_2"/>
    <property type="match status" value="1"/>
</dbReference>
<reference key="1">
    <citation type="submission" date="1992-06" db="EMBL/GenBank/DDBJ databases">
        <title>Nucleotide sequence of Schizosaccharomyces pombe superoxide dismutase cDNA.</title>
        <authorList>
            <person name="O'Dee K.M."/>
            <person name="Snider M.D."/>
        </authorList>
    </citation>
    <scope>NUCLEOTIDE SEQUENCE [MRNA]</scope>
</reference>
<reference key="2">
    <citation type="submission" date="1998-07" db="EMBL/GenBank/DDBJ databases">
        <title>S.pombe superoxide dismutase.</title>
        <authorList>
            <person name="Kawamukai M."/>
        </authorList>
    </citation>
    <scope>NUCLEOTIDE SEQUENCE [MRNA]</scope>
</reference>
<reference key="3">
    <citation type="journal article" date="2002" name="Biochem. Biophys. Res. Commun.">
        <title>Regulation and the role of Cu,Zn-containing superoxide dismutase in cell cycle progression of Schizosaccharomyces pombe.</title>
        <authorList>
            <person name="Lee J."/>
            <person name="Kwon E.-S."/>
            <person name="Kim D.-W."/>
            <person name="Cha J."/>
            <person name="Roe J.-H."/>
        </authorList>
    </citation>
    <scope>NUCLEOTIDE SEQUENCE [GENOMIC DNA]</scope>
    <source>
        <strain>972 / ATCC 24843</strain>
    </source>
</reference>
<reference key="4">
    <citation type="journal article" date="2002" name="Nature">
        <title>The genome sequence of Schizosaccharomyces pombe.</title>
        <authorList>
            <person name="Wood V."/>
            <person name="Gwilliam R."/>
            <person name="Rajandream M.A."/>
            <person name="Lyne M.H."/>
            <person name="Lyne R."/>
            <person name="Stewart A."/>
            <person name="Sgouros J.G."/>
            <person name="Peat N."/>
            <person name="Hayles J."/>
            <person name="Baker S.G."/>
            <person name="Basham D."/>
            <person name="Bowman S."/>
            <person name="Brooks K."/>
            <person name="Brown D."/>
            <person name="Brown S."/>
            <person name="Chillingworth T."/>
            <person name="Churcher C.M."/>
            <person name="Collins M."/>
            <person name="Connor R."/>
            <person name="Cronin A."/>
            <person name="Davis P."/>
            <person name="Feltwell T."/>
            <person name="Fraser A."/>
            <person name="Gentles S."/>
            <person name="Goble A."/>
            <person name="Hamlin N."/>
            <person name="Harris D.E."/>
            <person name="Hidalgo J."/>
            <person name="Hodgson G."/>
            <person name="Holroyd S."/>
            <person name="Hornsby T."/>
            <person name="Howarth S."/>
            <person name="Huckle E.J."/>
            <person name="Hunt S."/>
            <person name="Jagels K."/>
            <person name="James K.D."/>
            <person name="Jones L."/>
            <person name="Jones M."/>
            <person name="Leather S."/>
            <person name="McDonald S."/>
            <person name="McLean J."/>
            <person name="Mooney P."/>
            <person name="Moule S."/>
            <person name="Mungall K.L."/>
            <person name="Murphy L.D."/>
            <person name="Niblett D."/>
            <person name="Odell C."/>
            <person name="Oliver K."/>
            <person name="O'Neil S."/>
            <person name="Pearson D."/>
            <person name="Quail M.A."/>
            <person name="Rabbinowitsch E."/>
            <person name="Rutherford K.M."/>
            <person name="Rutter S."/>
            <person name="Saunders D."/>
            <person name="Seeger K."/>
            <person name="Sharp S."/>
            <person name="Skelton J."/>
            <person name="Simmonds M.N."/>
            <person name="Squares R."/>
            <person name="Squares S."/>
            <person name="Stevens K."/>
            <person name="Taylor K."/>
            <person name="Taylor R.G."/>
            <person name="Tivey A."/>
            <person name="Walsh S.V."/>
            <person name="Warren T."/>
            <person name="Whitehead S."/>
            <person name="Woodward J.R."/>
            <person name="Volckaert G."/>
            <person name="Aert R."/>
            <person name="Robben J."/>
            <person name="Grymonprez B."/>
            <person name="Weltjens I."/>
            <person name="Vanstreels E."/>
            <person name="Rieger M."/>
            <person name="Schaefer M."/>
            <person name="Mueller-Auer S."/>
            <person name="Gabel C."/>
            <person name="Fuchs M."/>
            <person name="Duesterhoeft A."/>
            <person name="Fritzc C."/>
            <person name="Holzer E."/>
            <person name="Moestl D."/>
            <person name="Hilbert H."/>
            <person name="Borzym K."/>
            <person name="Langer I."/>
            <person name="Beck A."/>
            <person name="Lehrach H."/>
            <person name="Reinhardt R."/>
            <person name="Pohl T.M."/>
            <person name="Eger P."/>
            <person name="Zimmermann W."/>
            <person name="Wedler H."/>
            <person name="Wambutt R."/>
            <person name="Purnelle B."/>
            <person name="Goffeau A."/>
            <person name="Cadieu E."/>
            <person name="Dreano S."/>
            <person name="Gloux S."/>
            <person name="Lelaure V."/>
            <person name="Mottier S."/>
            <person name="Galibert F."/>
            <person name="Aves S.J."/>
            <person name="Xiang Z."/>
            <person name="Hunt C."/>
            <person name="Moore K."/>
            <person name="Hurst S.M."/>
            <person name="Lucas M."/>
            <person name="Rochet M."/>
            <person name="Gaillardin C."/>
            <person name="Tallada V.A."/>
            <person name="Garzon A."/>
            <person name="Thode G."/>
            <person name="Daga R.R."/>
            <person name="Cruzado L."/>
            <person name="Jimenez J."/>
            <person name="Sanchez M."/>
            <person name="del Rey F."/>
            <person name="Benito J."/>
            <person name="Dominguez A."/>
            <person name="Revuelta J.L."/>
            <person name="Moreno S."/>
            <person name="Armstrong J."/>
            <person name="Forsburg S.L."/>
            <person name="Cerutti L."/>
            <person name="Lowe T."/>
            <person name="McCombie W.R."/>
            <person name="Paulsen I."/>
            <person name="Potashkin J."/>
            <person name="Shpakovski G.V."/>
            <person name="Ussery D."/>
            <person name="Barrell B.G."/>
            <person name="Nurse P."/>
        </authorList>
    </citation>
    <scope>NUCLEOTIDE SEQUENCE [LARGE SCALE GENOMIC DNA]</scope>
    <source>
        <strain>972 / ATCC 24843</strain>
    </source>
</reference>
<feature type="initiator methionine" description="Removed" evidence="2">
    <location>
        <position position="1"/>
    </location>
</feature>
<feature type="chain" id="PRO_0000164127" description="Superoxide dismutase [Cu-Zn]">
    <location>
        <begin position="2"/>
        <end position="154"/>
    </location>
</feature>
<feature type="binding site" evidence="2">
    <location>
        <position position="47"/>
    </location>
    <ligand>
        <name>Cu cation</name>
        <dbReference type="ChEBI" id="CHEBI:23378"/>
        <note>catalytic</note>
    </ligand>
</feature>
<feature type="binding site" evidence="2">
    <location>
        <position position="49"/>
    </location>
    <ligand>
        <name>Cu cation</name>
        <dbReference type="ChEBI" id="CHEBI:23378"/>
        <note>catalytic</note>
    </ligand>
</feature>
<feature type="binding site" evidence="2">
    <location>
        <position position="64"/>
    </location>
    <ligand>
        <name>Cu cation</name>
        <dbReference type="ChEBI" id="CHEBI:23378"/>
        <note>catalytic</note>
    </ligand>
</feature>
<feature type="binding site" evidence="2">
    <location>
        <position position="64"/>
    </location>
    <ligand>
        <name>Zn(2+)</name>
        <dbReference type="ChEBI" id="CHEBI:29105"/>
        <note>structural</note>
    </ligand>
</feature>
<feature type="binding site" evidence="2">
    <location>
        <position position="72"/>
    </location>
    <ligand>
        <name>Zn(2+)</name>
        <dbReference type="ChEBI" id="CHEBI:29105"/>
        <note>structural</note>
    </ligand>
</feature>
<feature type="binding site" evidence="2">
    <location>
        <position position="81"/>
    </location>
    <ligand>
        <name>Zn(2+)</name>
        <dbReference type="ChEBI" id="CHEBI:29105"/>
        <note>structural</note>
    </ligand>
</feature>
<feature type="binding site" evidence="2">
    <location>
        <position position="84"/>
    </location>
    <ligand>
        <name>Zn(2+)</name>
        <dbReference type="ChEBI" id="CHEBI:29105"/>
        <note>structural</note>
    </ligand>
</feature>
<feature type="binding site" evidence="2">
    <location>
        <position position="121"/>
    </location>
    <ligand>
        <name>Cu cation</name>
        <dbReference type="ChEBI" id="CHEBI:23378"/>
        <note>catalytic</note>
    </ligand>
</feature>
<feature type="binding site" evidence="2">
    <location>
        <position position="144"/>
    </location>
    <ligand>
        <name>substrate</name>
    </ligand>
</feature>
<feature type="disulfide bond" evidence="2">
    <location>
        <begin position="58"/>
        <end position="147"/>
    </location>
</feature>
<organism>
    <name type="scientific">Schizosaccharomyces pombe (strain 972 / ATCC 24843)</name>
    <name type="common">Fission yeast</name>
    <dbReference type="NCBI Taxonomy" id="284812"/>
    <lineage>
        <taxon>Eukaryota</taxon>
        <taxon>Fungi</taxon>
        <taxon>Dikarya</taxon>
        <taxon>Ascomycota</taxon>
        <taxon>Taphrinomycotina</taxon>
        <taxon>Schizosaccharomycetes</taxon>
        <taxon>Schizosaccharomycetales</taxon>
        <taxon>Schizosaccharomycetaceae</taxon>
        <taxon>Schizosaccharomyces</taxon>
    </lineage>
</organism>
<comment type="function">
    <text evidence="1">Destroys radicals which are normally produced within the cells and which are toxic to biological systems.</text>
</comment>
<comment type="catalytic activity">
    <reaction evidence="3">
        <text>2 superoxide + 2 H(+) = H2O2 + O2</text>
        <dbReference type="Rhea" id="RHEA:20696"/>
        <dbReference type="ChEBI" id="CHEBI:15378"/>
        <dbReference type="ChEBI" id="CHEBI:15379"/>
        <dbReference type="ChEBI" id="CHEBI:16240"/>
        <dbReference type="ChEBI" id="CHEBI:18421"/>
        <dbReference type="EC" id="1.15.1.1"/>
    </reaction>
</comment>
<comment type="cofactor">
    <cofactor evidence="2">
        <name>Cu cation</name>
        <dbReference type="ChEBI" id="CHEBI:23378"/>
    </cofactor>
    <text evidence="2">Binds 1 copper ion per subunit.</text>
</comment>
<comment type="cofactor">
    <cofactor evidence="2">
        <name>Zn(2+)</name>
        <dbReference type="ChEBI" id="CHEBI:29105"/>
    </cofactor>
    <text evidence="2">Binds 1 zinc ion per subunit.</text>
</comment>
<comment type="subunit">
    <text evidence="3">Homodimer.</text>
</comment>
<comment type="subcellular location">
    <subcellularLocation>
        <location evidence="2">Cytoplasm</location>
    </subcellularLocation>
</comment>
<comment type="similarity">
    <text evidence="4">Belongs to the Cu-Zn superoxide dismutase family.</text>
</comment>